<reference key="1">
    <citation type="journal article" date="2000" name="DNA Res.">
        <title>Structural analysis of Arabidopsis thaliana chromosome 3. I. Sequence features of the regions of 4,504,864 bp covered by sixty P1 and TAC clones.</title>
        <authorList>
            <person name="Sato S."/>
            <person name="Nakamura Y."/>
            <person name="Kaneko T."/>
            <person name="Katoh T."/>
            <person name="Asamizu E."/>
            <person name="Tabata S."/>
        </authorList>
    </citation>
    <scope>NUCLEOTIDE SEQUENCE [LARGE SCALE GENOMIC DNA]</scope>
    <source>
        <strain>cv. Columbia</strain>
    </source>
</reference>
<reference key="2">
    <citation type="journal article" date="2017" name="Plant J.">
        <title>Araport11: a complete reannotation of the Arabidopsis thaliana reference genome.</title>
        <authorList>
            <person name="Cheng C.Y."/>
            <person name="Krishnakumar V."/>
            <person name="Chan A.P."/>
            <person name="Thibaud-Nissen F."/>
            <person name="Schobel S."/>
            <person name="Town C.D."/>
        </authorList>
    </citation>
    <scope>GENOME REANNOTATION</scope>
    <source>
        <strain>cv. Columbia</strain>
    </source>
</reference>
<reference key="3">
    <citation type="journal article" date="2003" name="Science">
        <title>Empirical analysis of transcriptional activity in the Arabidopsis genome.</title>
        <authorList>
            <person name="Yamada K."/>
            <person name="Lim J."/>
            <person name="Dale J.M."/>
            <person name="Chen H."/>
            <person name="Shinn P."/>
            <person name="Palm C.J."/>
            <person name="Southwick A.M."/>
            <person name="Wu H.C."/>
            <person name="Kim C.J."/>
            <person name="Nguyen M."/>
            <person name="Pham P.K."/>
            <person name="Cheuk R.F."/>
            <person name="Karlin-Newmann G."/>
            <person name="Liu S.X."/>
            <person name="Lam B."/>
            <person name="Sakano H."/>
            <person name="Wu T."/>
            <person name="Yu G."/>
            <person name="Miranda M."/>
            <person name="Quach H.L."/>
            <person name="Tripp M."/>
            <person name="Chang C.H."/>
            <person name="Lee J.M."/>
            <person name="Toriumi M.J."/>
            <person name="Chan M.M."/>
            <person name="Tang C.C."/>
            <person name="Onodera C.S."/>
            <person name="Deng J.M."/>
            <person name="Akiyama K."/>
            <person name="Ansari Y."/>
            <person name="Arakawa T."/>
            <person name="Banh J."/>
            <person name="Banno F."/>
            <person name="Bowser L."/>
            <person name="Brooks S.Y."/>
            <person name="Carninci P."/>
            <person name="Chao Q."/>
            <person name="Choy N."/>
            <person name="Enju A."/>
            <person name="Goldsmith A.D."/>
            <person name="Gurjal M."/>
            <person name="Hansen N.F."/>
            <person name="Hayashizaki Y."/>
            <person name="Johnson-Hopson C."/>
            <person name="Hsuan V.W."/>
            <person name="Iida K."/>
            <person name="Karnes M."/>
            <person name="Khan S."/>
            <person name="Koesema E."/>
            <person name="Ishida J."/>
            <person name="Jiang P.X."/>
            <person name="Jones T."/>
            <person name="Kawai J."/>
            <person name="Kamiya A."/>
            <person name="Meyers C."/>
            <person name="Nakajima M."/>
            <person name="Narusaka M."/>
            <person name="Seki M."/>
            <person name="Sakurai T."/>
            <person name="Satou M."/>
            <person name="Tamse R."/>
            <person name="Vaysberg M."/>
            <person name="Wallender E.K."/>
            <person name="Wong C."/>
            <person name="Yamamura Y."/>
            <person name="Yuan S."/>
            <person name="Shinozaki K."/>
            <person name="Davis R.W."/>
            <person name="Theologis A."/>
            <person name="Ecker J.R."/>
        </authorList>
    </citation>
    <scope>NUCLEOTIDE SEQUENCE [LARGE SCALE MRNA]</scope>
    <source>
        <strain>cv. Columbia</strain>
    </source>
</reference>
<reference key="4">
    <citation type="submission" date="2002-03" db="EMBL/GenBank/DDBJ databases">
        <title>Full-length cDNA from Arabidopsis thaliana.</title>
        <authorList>
            <person name="Brover V.V."/>
            <person name="Troukhan M.E."/>
            <person name="Alexandrov N.A."/>
            <person name="Lu Y.-P."/>
            <person name="Flavell R.B."/>
            <person name="Feldmann K.A."/>
        </authorList>
    </citation>
    <scope>NUCLEOTIDE SEQUENCE [LARGE SCALE MRNA]</scope>
</reference>
<reference key="5">
    <citation type="online journal article" date="1999" name="Plant Gene Register">
        <title>Identification of two putative nitrate transporters highly homologous to CHL 1 from Arabidopsis thaliana.</title>
        <authorList>
            <person name="Hatzfeld Y."/>
            <person name="Saito K."/>
        </authorList>
        <locator>PGR99-018</locator>
    </citation>
    <scope>NUCLEOTIDE SEQUENCE [MRNA] OF 24-590</scope>
</reference>
<reference key="6">
    <citation type="journal article" date="2003" name="Plant Cell Physiol.">
        <title>Regulation of NRT1 and NRT2 gene families of Arabidopsis thaliana: responses to nitrate provision.</title>
        <authorList>
            <person name="Okamoto M."/>
            <person name="Vidmar J.J."/>
            <person name="Glass A.D."/>
        </authorList>
    </citation>
    <scope>INDUCTION BY NITRATE</scope>
</reference>
<reference key="7">
    <citation type="journal article" date="2007" name="FEBS Lett.">
        <title>Nitrate transporters and peptide transporters.</title>
        <authorList>
            <person name="Tsay Y.F."/>
            <person name="Chiu C.C."/>
            <person name="Tsai C.B."/>
            <person name="Ho C.H."/>
            <person name="Hsu P.K."/>
        </authorList>
    </citation>
    <scope>TISSUE SPECIFICITY</scope>
    <scope>GENE FAMILY</scope>
</reference>
<reference key="8">
    <citation type="journal article" date="2009" name="Plant Physiol.">
        <title>Large-scale Arabidopsis phosphoproteome profiling reveals novel chloroplast kinase substrates and phosphorylation networks.</title>
        <authorList>
            <person name="Reiland S."/>
            <person name="Messerli G."/>
            <person name="Baerenfaller K."/>
            <person name="Gerrits B."/>
            <person name="Endler A."/>
            <person name="Grossmann J."/>
            <person name="Gruissem W."/>
            <person name="Baginsky S."/>
        </authorList>
    </citation>
    <scope>IDENTIFICATION BY MASS SPECTROMETRY [LARGE SCALE ANALYSIS]</scope>
</reference>
<reference key="9">
    <citation type="journal article" date="2010" name="Plant Cell">
        <title>The Arabidopsis nitrate transporter NRT1.8 functions in nitrate removal from the xylem sap and mediates cadmium tolerance.</title>
        <authorList>
            <person name="Li J.Y."/>
            <person name="Fu Y.L."/>
            <person name="Pike S.M."/>
            <person name="Bao J."/>
            <person name="Tian W."/>
            <person name="Zhang Y."/>
            <person name="Chen C.Z."/>
            <person name="Zhang Y."/>
            <person name="Li H.M."/>
            <person name="Huang J."/>
            <person name="Li L.G."/>
            <person name="Schroeder J.I."/>
            <person name="Gassmann W."/>
            <person name="Gong J.M."/>
        </authorList>
    </citation>
    <scope>GENE FAMILY</scope>
</reference>
<reference key="10">
    <citation type="journal article" date="2014" name="Trends Plant Sci.">
        <title>A unified nomenclature of NITRATE TRANSPORTER 1/PEPTIDE TRANSPORTER family members in plants.</title>
        <authorList>
            <person name="Leran S."/>
            <person name="Varala K."/>
            <person name="Boyer J.C."/>
            <person name="Chiurazzi M."/>
            <person name="Crawford N."/>
            <person name="Daniel-Vedele F."/>
            <person name="David L."/>
            <person name="Dickstein R."/>
            <person name="Fernandez E."/>
            <person name="Forde B."/>
            <person name="Gassmann W."/>
            <person name="Geiger D."/>
            <person name="Gojon A."/>
            <person name="Gong J.M."/>
            <person name="Halkier B.A."/>
            <person name="Harris J.M."/>
            <person name="Hedrich R."/>
            <person name="Limami A.M."/>
            <person name="Rentsch D."/>
            <person name="Seo M."/>
            <person name="Tsay Y.F."/>
            <person name="Zhang M."/>
            <person name="Coruzzi G."/>
            <person name="Lacombe B."/>
        </authorList>
    </citation>
    <scope>GENE FAMILY</scope>
    <scope>NOMENCLATURE</scope>
</reference>
<organism>
    <name type="scientific">Arabidopsis thaliana</name>
    <name type="common">Mouse-ear cress</name>
    <dbReference type="NCBI Taxonomy" id="3702"/>
    <lineage>
        <taxon>Eukaryota</taxon>
        <taxon>Viridiplantae</taxon>
        <taxon>Streptophyta</taxon>
        <taxon>Embryophyta</taxon>
        <taxon>Tracheophyta</taxon>
        <taxon>Spermatophyta</taxon>
        <taxon>Magnoliopsida</taxon>
        <taxon>eudicotyledons</taxon>
        <taxon>Gunneridae</taxon>
        <taxon>Pentapetalae</taxon>
        <taxon>rosids</taxon>
        <taxon>malvids</taxon>
        <taxon>Brassicales</taxon>
        <taxon>Brassicaceae</taxon>
        <taxon>Camelineae</taxon>
        <taxon>Arabidopsis</taxon>
    </lineage>
</organism>
<evidence type="ECO:0000250" key="1"/>
<evidence type="ECO:0000255" key="2"/>
<evidence type="ECO:0000256" key="3">
    <source>
        <dbReference type="SAM" id="MobiDB-lite"/>
    </source>
</evidence>
<evidence type="ECO:0000269" key="4">
    <source>
    </source>
</evidence>
<evidence type="ECO:0000269" key="5">
    <source>
    </source>
</evidence>
<evidence type="ECO:0000305" key="6"/>
<name>PTR33_ARATH</name>
<proteinExistence type="evidence at protein level"/>
<gene>
    <name type="primary">NPF6.4</name>
    <name type="synonym">NRT1.3</name>
    <name type="synonym">NTP3</name>
    <name type="ordered locus">At3g21670</name>
    <name type="ORF">MIL23.23</name>
</gene>
<protein>
    <recommendedName>
        <fullName>Protein NRT1/ PTR FAMILY 6.4</fullName>
        <shortName>AtNPF6.4</shortName>
    </recommendedName>
    <alternativeName>
        <fullName>Nitrate transporter 1.3</fullName>
    </alternativeName>
</protein>
<feature type="chain" id="PRO_0000399967" description="Protein NRT1/ PTR FAMILY 6.4">
    <location>
        <begin position="1"/>
        <end position="590"/>
    </location>
</feature>
<feature type="transmembrane region" description="Helical" evidence="2">
    <location>
        <begin position="48"/>
        <end position="68"/>
    </location>
</feature>
<feature type="transmembrane region" description="Helical" evidence="2">
    <location>
        <begin position="73"/>
        <end position="93"/>
    </location>
</feature>
<feature type="transmembrane region" description="Helical" evidence="2">
    <location>
        <begin position="104"/>
        <end position="124"/>
    </location>
</feature>
<feature type="transmembrane region" description="Helical" evidence="2">
    <location>
        <begin position="147"/>
        <end position="167"/>
    </location>
</feature>
<feature type="transmembrane region" description="Helical" evidence="2">
    <location>
        <begin position="197"/>
        <end position="217"/>
    </location>
</feature>
<feature type="transmembrane region" description="Helical" evidence="2">
    <location>
        <begin position="222"/>
        <end position="242"/>
    </location>
</feature>
<feature type="transmembrane region" description="Helical" evidence="2">
    <location>
        <begin position="332"/>
        <end position="352"/>
    </location>
</feature>
<feature type="transmembrane region" description="Helical" evidence="2">
    <location>
        <begin position="371"/>
        <end position="391"/>
    </location>
</feature>
<feature type="transmembrane region" description="Helical" evidence="2">
    <location>
        <begin position="419"/>
        <end position="439"/>
    </location>
</feature>
<feature type="transmembrane region" description="Helical" evidence="2">
    <location>
        <begin position="453"/>
        <end position="473"/>
    </location>
</feature>
<feature type="transmembrane region" description="Helical" evidence="2">
    <location>
        <begin position="492"/>
        <end position="512"/>
    </location>
</feature>
<feature type="transmembrane region" description="Helical" evidence="2">
    <location>
        <begin position="533"/>
        <end position="553"/>
    </location>
</feature>
<feature type="region of interest" description="Disordered" evidence="3">
    <location>
        <begin position="1"/>
        <end position="24"/>
    </location>
</feature>
<feature type="sequence conflict" description="In Ref. 4; AAM61107." evidence="6" ref="4">
    <original>AY</original>
    <variation>SF</variation>
    <location>
        <begin position="17"/>
        <end position="18"/>
    </location>
</feature>
<feature type="sequence conflict" description="In Ref. 4; AAM61107." evidence="6" ref="4">
    <original>D</original>
    <variation>N</variation>
    <location>
        <position position="299"/>
    </location>
</feature>
<dbReference type="EMBL" id="AB019232">
    <property type="protein sequence ID" value="BAB02362.1"/>
    <property type="molecule type" value="Genomic_DNA"/>
</dbReference>
<dbReference type="EMBL" id="CP002686">
    <property type="protein sequence ID" value="AEE76536.1"/>
    <property type="molecule type" value="Genomic_DNA"/>
</dbReference>
<dbReference type="EMBL" id="AF372959">
    <property type="protein sequence ID" value="AAK50097.1"/>
    <property type="molecule type" value="mRNA"/>
</dbReference>
<dbReference type="EMBL" id="AY143946">
    <property type="protein sequence ID" value="AAN28885.1"/>
    <property type="molecule type" value="mRNA"/>
</dbReference>
<dbReference type="EMBL" id="AY084539">
    <property type="protein sequence ID" value="AAM61107.1"/>
    <property type="molecule type" value="mRNA"/>
</dbReference>
<dbReference type="EMBL" id="AJ131464">
    <property type="protein sequence ID" value="CAB38706.1"/>
    <property type="molecule type" value="mRNA"/>
</dbReference>
<dbReference type="PIR" id="T52585">
    <property type="entry name" value="T52585"/>
</dbReference>
<dbReference type="RefSeq" id="NP_188804.1">
    <property type="nucleotide sequence ID" value="NM_113062.3"/>
</dbReference>
<dbReference type="SMR" id="Q9LVE0"/>
<dbReference type="FunCoup" id="Q9LVE0">
    <property type="interactions" value="1781"/>
</dbReference>
<dbReference type="STRING" id="3702.Q9LVE0"/>
<dbReference type="iPTMnet" id="Q9LVE0"/>
<dbReference type="PaxDb" id="3702-AT3G21670.1"/>
<dbReference type="ProteomicsDB" id="226235"/>
<dbReference type="EnsemblPlants" id="AT3G21670.1">
    <property type="protein sequence ID" value="AT3G21670.1"/>
    <property type="gene ID" value="AT3G21670"/>
</dbReference>
<dbReference type="GeneID" id="821721"/>
<dbReference type="Gramene" id="AT3G21670.1">
    <property type="protein sequence ID" value="AT3G21670.1"/>
    <property type="gene ID" value="AT3G21670"/>
</dbReference>
<dbReference type="KEGG" id="ath:AT3G21670"/>
<dbReference type="Araport" id="AT3G21670"/>
<dbReference type="TAIR" id="AT3G21670">
    <property type="gene designation" value="NPF6.4"/>
</dbReference>
<dbReference type="eggNOG" id="KOG1237">
    <property type="taxonomic scope" value="Eukaryota"/>
</dbReference>
<dbReference type="HOGENOM" id="CLU_009313_4_1_1"/>
<dbReference type="InParanoid" id="Q9LVE0"/>
<dbReference type="OMA" id="RMGRFWT"/>
<dbReference type="OrthoDB" id="8904098at2759"/>
<dbReference type="PhylomeDB" id="Q9LVE0"/>
<dbReference type="PRO" id="PR:Q9LVE0"/>
<dbReference type="Proteomes" id="UP000006548">
    <property type="component" value="Chromosome 3"/>
</dbReference>
<dbReference type="ExpressionAtlas" id="Q9LVE0">
    <property type="expression patterns" value="baseline and differential"/>
</dbReference>
<dbReference type="GO" id="GO:0005829">
    <property type="term" value="C:cytosol"/>
    <property type="evidence" value="ECO:0007005"/>
    <property type="project" value="TAIR"/>
</dbReference>
<dbReference type="GO" id="GO:0016020">
    <property type="term" value="C:membrane"/>
    <property type="evidence" value="ECO:0007669"/>
    <property type="project" value="UniProtKB-SubCell"/>
</dbReference>
<dbReference type="GO" id="GO:0015293">
    <property type="term" value="F:symporter activity"/>
    <property type="evidence" value="ECO:0007669"/>
    <property type="project" value="UniProtKB-KW"/>
</dbReference>
<dbReference type="GO" id="GO:0042128">
    <property type="term" value="P:nitrate assimilation"/>
    <property type="evidence" value="ECO:0007669"/>
    <property type="project" value="UniProtKB-KW"/>
</dbReference>
<dbReference type="CDD" id="cd17413">
    <property type="entry name" value="MFS_NPF6"/>
    <property type="match status" value="1"/>
</dbReference>
<dbReference type="Gene3D" id="1.20.1250.20">
    <property type="entry name" value="MFS general substrate transporter like domains"/>
    <property type="match status" value="1"/>
</dbReference>
<dbReference type="InterPro" id="IPR036259">
    <property type="entry name" value="MFS_trans_sf"/>
</dbReference>
<dbReference type="InterPro" id="IPR000109">
    <property type="entry name" value="POT_fam"/>
</dbReference>
<dbReference type="PANTHER" id="PTHR11654">
    <property type="entry name" value="OLIGOPEPTIDE TRANSPORTER-RELATED"/>
    <property type="match status" value="1"/>
</dbReference>
<dbReference type="Pfam" id="PF00854">
    <property type="entry name" value="PTR2"/>
    <property type="match status" value="1"/>
</dbReference>
<dbReference type="SUPFAM" id="SSF103473">
    <property type="entry name" value="MFS general substrate transporter"/>
    <property type="match status" value="1"/>
</dbReference>
<comment type="function">
    <text evidence="1">Low-affinity nitrate transporter.</text>
</comment>
<comment type="subcellular location">
    <subcellularLocation>
        <location evidence="6">Membrane</location>
        <topology evidence="6">Multi-pass membrane protein</topology>
    </subcellularLocation>
</comment>
<comment type="tissue specificity">
    <text evidence="5">Expressed in leaves, flowers and siliques. Detected in leaves.</text>
</comment>
<comment type="induction">
    <text evidence="4">Up-regulated in the shoots by nitrate, but down-regulated in the roots.</text>
</comment>
<comment type="similarity">
    <text evidence="6">Belongs to the major facilitator superfamily. Proton-dependent oligopeptide transporter (POT/PTR) (TC 2.A.17) family.</text>
</comment>
<keyword id="KW-0472">Membrane</keyword>
<keyword id="KW-0534">Nitrate assimilation</keyword>
<keyword id="KW-1185">Reference proteome</keyword>
<keyword id="KW-0769">Symport</keyword>
<keyword id="KW-0812">Transmembrane</keyword>
<keyword id="KW-1133">Transmembrane helix</keyword>
<keyword id="KW-0813">Transport</keyword>
<sequence length="590" mass="65246">MVHVSSSHGAKDGSEEAYDYRGNPPDKSKTGGWLGAGLILGSELSERICVMGISMNLVTYLVGDLHISSAKSATIVTNFMGTLNLLGLLGGFLADAKLGRYKMVAISASVTALGVLLLTVATTISSMRPPICDDFRRLHHQCIEANGHQLALLYVALYTIALGGGGIKSNVSGFGSDQFDTSDPKEEKQMIFFFNRFYFSISVGSLFAVIALVYVQDNVGRGWGYGISAATMVVAAIVLLCGTKRYRFKKPKGSPFTTIWRVGFLAWKKRKESYPAHPSLLNGYDNTTVPHTEMLKCLDKAAISKNESSPSSKDFEEKDPWIVSTVTQVEEVKLVMKLVPIWATNILFWTIYSQMTTFTVEQATFMDRKLGSFTVPAGSYSAFLILTILLFTSLNERVFVPLTRRLTKKPQGITSLQRIGVGLVFSMAAMAVAAVIENARREAAVNNDKKISAFWLVPQYFLVGAGEAFAYVGQLEFFIREAPERMKSMSTGLFLSTISMGFFVSSLLVSLVDRVTDKSWLRSNLNKARLNYFYWLLVVLGALNFLIFIVFAMKHQYKADVITVVVTDDDSVEKEVTKKESSEFELKDIP</sequence>
<accession>Q9LVE0</accession>
<accession>Q8LG02</accession>
<accession>Q9ZPE3</accession>